<protein>
    <recommendedName>
        <fullName evidence="4">Trypsin inhibitor 7</fullName>
    </recommendedName>
    <alternativeName>
        <fullName evidence="4">CyPTI-VII</fullName>
    </alternativeName>
    <alternativeName>
        <fullName evidence="4">Trypsin inhibitor VII</fullName>
    </alternativeName>
</protein>
<sequence>ARICPRILMKCKKDSDCLAECICQEHGFCG</sequence>
<proteinExistence type="evidence at protein level"/>
<name>ITR7_CYCPE</name>
<accession>P83398</accession>
<reference evidence="5" key="1">
    <citation type="journal article" date="2006" name="Biochim. Biophys. Acta">
        <title>Isolation and primary structures of seven serine proteinase inhibitors from Cyclanthera pedata seeds.</title>
        <authorList>
            <person name="Kowalska J."/>
            <person name="Zablocka A."/>
            <person name="Wilusz T."/>
        </authorList>
    </citation>
    <scope>PROTEIN SEQUENCE</scope>
    <scope>FUNCTION</scope>
    <scope>REACTIVE SITE</scope>
    <source>
        <tissue evidence="3">Seed</tissue>
    </source>
</reference>
<evidence type="ECO:0000250" key="1">
    <source>
        <dbReference type="UniProtKB" id="P01074"/>
    </source>
</evidence>
<evidence type="ECO:0000255" key="2"/>
<evidence type="ECO:0000269" key="3">
    <source>
    </source>
</evidence>
<evidence type="ECO:0000303" key="4">
    <source>
    </source>
</evidence>
<evidence type="ECO:0000305" key="5"/>
<keyword id="KW-0903">Direct protein sequencing</keyword>
<keyword id="KW-1015">Disulfide bond</keyword>
<keyword id="KW-0960">Knottin</keyword>
<keyword id="KW-0646">Protease inhibitor</keyword>
<keyword id="KW-0964">Secreted</keyword>
<keyword id="KW-0722">Serine protease inhibitor</keyword>
<dbReference type="SMR" id="P83398"/>
<dbReference type="GO" id="GO:0005576">
    <property type="term" value="C:extracellular region"/>
    <property type="evidence" value="ECO:0007669"/>
    <property type="project" value="UniProtKB-SubCell"/>
</dbReference>
<dbReference type="GO" id="GO:0004867">
    <property type="term" value="F:serine-type endopeptidase inhibitor activity"/>
    <property type="evidence" value="ECO:0007669"/>
    <property type="project" value="UniProtKB-KW"/>
</dbReference>
<dbReference type="CDD" id="cd00150">
    <property type="entry name" value="PlantTI"/>
    <property type="match status" value="1"/>
</dbReference>
<dbReference type="Gene3D" id="4.10.75.20">
    <property type="match status" value="1"/>
</dbReference>
<dbReference type="InterPro" id="IPR000737">
    <property type="entry name" value="Prot_inh_squash"/>
</dbReference>
<dbReference type="InterPro" id="IPR011052">
    <property type="entry name" value="Proteinase_amylase_inhib_sf"/>
</dbReference>
<dbReference type="Pfam" id="PF00299">
    <property type="entry name" value="Squash"/>
    <property type="match status" value="1"/>
</dbReference>
<dbReference type="PRINTS" id="PR00293">
    <property type="entry name" value="SQUASHINHBTR"/>
</dbReference>
<dbReference type="SMART" id="SM00286">
    <property type="entry name" value="PTI"/>
    <property type="match status" value="1"/>
</dbReference>
<dbReference type="SUPFAM" id="SSF57027">
    <property type="entry name" value="Plant inhibitors of proteinases and amylases"/>
    <property type="match status" value="1"/>
</dbReference>
<dbReference type="PROSITE" id="PS00286">
    <property type="entry name" value="SQUASH_INHIBITOR"/>
    <property type="match status" value="1"/>
</dbReference>
<organism>
    <name type="scientific">Cyclanthera pedata</name>
    <name type="common">Achocha</name>
    <name type="synonym">Caihua</name>
    <dbReference type="NCBI Taxonomy" id="198836"/>
    <lineage>
        <taxon>Eukaryota</taxon>
        <taxon>Viridiplantae</taxon>
        <taxon>Streptophyta</taxon>
        <taxon>Embryophyta</taxon>
        <taxon>Tracheophyta</taxon>
        <taxon>Spermatophyta</taxon>
        <taxon>Magnoliopsida</taxon>
        <taxon>eudicotyledons</taxon>
        <taxon>Gunneridae</taxon>
        <taxon>Pentapetalae</taxon>
        <taxon>rosids</taxon>
        <taxon>fabids</taxon>
        <taxon>Cucurbitales</taxon>
        <taxon>Cucurbitaceae</taxon>
        <taxon>Sicyoeae</taxon>
        <taxon>Cyclanthera</taxon>
    </lineage>
</organism>
<comment type="function">
    <text evidence="3">Strongly inhibits trypsin, weakly inhibits chymotrypsin.</text>
</comment>
<comment type="subcellular location">
    <subcellularLocation>
        <location evidence="5">Secreted</location>
    </subcellularLocation>
</comment>
<comment type="domain">
    <text evidence="1">The presence of a 'disulfide through disulfide knot' structurally defines this protein as a knottin.</text>
</comment>
<comment type="similarity">
    <text evidence="2">Belongs to the protease inhibitor I7 (squash-type serine protease inhibitor) family.</text>
</comment>
<feature type="peptide" id="PRO_0000044380" description="Trypsin inhibitor 7" evidence="3">
    <location>
        <begin position="1"/>
        <end position="30"/>
    </location>
</feature>
<feature type="site" description="Reactive bond" evidence="3">
    <location>
        <begin position="6"/>
        <end position="7"/>
    </location>
</feature>
<feature type="disulfide bond" evidence="1">
    <location>
        <begin position="4"/>
        <end position="21"/>
    </location>
</feature>
<feature type="disulfide bond" evidence="1">
    <location>
        <begin position="11"/>
        <end position="23"/>
    </location>
</feature>
<feature type="disulfide bond" evidence="1">
    <location>
        <begin position="17"/>
        <end position="29"/>
    </location>
</feature>